<gene>
    <name evidence="1" type="primary">aroC</name>
    <name type="ordered locus">VFMJ11_1937</name>
</gene>
<accession>B5FGA8</accession>
<protein>
    <recommendedName>
        <fullName evidence="1">Chorismate synthase</fullName>
        <shortName evidence="1">CS</shortName>
        <ecNumber evidence="1">4.2.3.5</ecNumber>
    </recommendedName>
    <alternativeName>
        <fullName evidence="1">5-enolpyruvylshikimate-3-phosphate phospholyase</fullName>
    </alternativeName>
</protein>
<name>AROC_ALIFM</name>
<feature type="chain" id="PRO_1000115414" description="Chorismate synthase">
    <location>
        <begin position="1"/>
        <end position="361"/>
    </location>
</feature>
<feature type="binding site" evidence="1">
    <location>
        <position position="48"/>
    </location>
    <ligand>
        <name>NADP(+)</name>
        <dbReference type="ChEBI" id="CHEBI:58349"/>
    </ligand>
</feature>
<feature type="binding site" evidence="1">
    <location>
        <begin position="125"/>
        <end position="127"/>
    </location>
    <ligand>
        <name>FMN</name>
        <dbReference type="ChEBI" id="CHEBI:58210"/>
    </ligand>
</feature>
<feature type="binding site" evidence="1">
    <location>
        <begin position="238"/>
        <end position="239"/>
    </location>
    <ligand>
        <name>FMN</name>
        <dbReference type="ChEBI" id="CHEBI:58210"/>
    </ligand>
</feature>
<feature type="binding site" evidence="1">
    <location>
        <position position="278"/>
    </location>
    <ligand>
        <name>FMN</name>
        <dbReference type="ChEBI" id="CHEBI:58210"/>
    </ligand>
</feature>
<feature type="binding site" evidence="1">
    <location>
        <begin position="293"/>
        <end position="297"/>
    </location>
    <ligand>
        <name>FMN</name>
        <dbReference type="ChEBI" id="CHEBI:58210"/>
    </ligand>
</feature>
<feature type="binding site" evidence="1">
    <location>
        <position position="319"/>
    </location>
    <ligand>
        <name>FMN</name>
        <dbReference type="ChEBI" id="CHEBI:58210"/>
    </ligand>
</feature>
<dbReference type="EC" id="4.2.3.5" evidence="1"/>
<dbReference type="EMBL" id="CP001139">
    <property type="protein sequence ID" value="ACH67141.1"/>
    <property type="molecule type" value="Genomic_DNA"/>
</dbReference>
<dbReference type="RefSeq" id="WP_012534225.1">
    <property type="nucleotide sequence ID" value="NC_011184.1"/>
</dbReference>
<dbReference type="SMR" id="B5FGA8"/>
<dbReference type="KEGG" id="vfm:VFMJ11_1937"/>
<dbReference type="HOGENOM" id="CLU_034547_0_2_6"/>
<dbReference type="UniPathway" id="UPA00053">
    <property type="reaction ID" value="UER00090"/>
</dbReference>
<dbReference type="Proteomes" id="UP000001857">
    <property type="component" value="Chromosome I"/>
</dbReference>
<dbReference type="GO" id="GO:0005829">
    <property type="term" value="C:cytosol"/>
    <property type="evidence" value="ECO:0007669"/>
    <property type="project" value="TreeGrafter"/>
</dbReference>
<dbReference type="GO" id="GO:0004107">
    <property type="term" value="F:chorismate synthase activity"/>
    <property type="evidence" value="ECO:0007669"/>
    <property type="project" value="UniProtKB-UniRule"/>
</dbReference>
<dbReference type="GO" id="GO:0010181">
    <property type="term" value="F:FMN binding"/>
    <property type="evidence" value="ECO:0007669"/>
    <property type="project" value="TreeGrafter"/>
</dbReference>
<dbReference type="GO" id="GO:0008652">
    <property type="term" value="P:amino acid biosynthetic process"/>
    <property type="evidence" value="ECO:0007669"/>
    <property type="project" value="UniProtKB-KW"/>
</dbReference>
<dbReference type="GO" id="GO:0009073">
    <property type="term" value="P:aromatic amino acid family biosynthetic process"/>
    <property type="evidence" value="ECO:0007669"/>
    <property type="project" value="UniProtKB-KW"/>
</dbReference>
<dbReference type="GO" id="GO:0009423">
    <property type="term" value="P:chorismate biosynthetic process"/>
    <property type="evidence" value="ECO:0007669"/>
    <property type="project" value="UniProtKB-UniRule"/>
</dbReference>
<dbReference type="CDD" id="cd07304">
    <property type="entry name" value="Chorismate_synthase"/>
    <property type="match status" value="1"/>
</dbReference>
<dbReference type="FunFam" id="3.60.150.10:FF:000001">
    <property type="entry name" value="Chorismate synthase"/>
    <property type="match status" value="1"/>
</dbReference>
<dbReference type="Gene3D" id="3.60.150.10">
    <property type="entry name" value="Chorismate synthase AroC"/>
    <property type="match status" value="1"/>
</dbReference>
<dbReference type="HAMAP" id="MF_00300">
    <property type="entry name" value="Chorismate_synth"/>
    <property type="match status" value="1"/>
</dbReference>
<dbReference type="InterPro" id="IPR000453">
    <property type="entry name" value="Chorismate_synth"/>
</dbReference>
<dbReference type="InterPro" id="IPR035904">
    <property type="entry name" value="Chorismate_synth_AroC_sf"/>
</dbReference>
<dbReference type="InterPro" id="IPR020541">
    <property type="entry name" value="Chorismate_synthase_CS"/>
</dbReference>
<dbReference type="NCBIfam" id="TIGR00033">
    <property type="entry name" value="aroC"/>
    <property type="match status" value="1"/>
</dbReference>
<dbReference type="NCBIfam" id="NF003793">
    <property type="entry name" value="PRK05382.1"/>
    <property type="match status" value="1"/>
</dbReference>
<dbReference type="PANTHER" id="PTHR21085">
    <property type="entry name" value="CHORISMATE SYNTHASE"/>
    <property type="match status" value="1"/>
</dbReference>
<dbReference type="PANTHER" id="PTHR21085:SF0">
    <property type="entry name" value="CHORISMATE SYNTHASE"/>
    <property type="match status" value="1"/>
</dbReference>
<dbReference type="Pfam" id="PF01264">
    <property type="entry name" value="Chorismate_synt"/>
    <property type="match status" value="1"/>
</dbReference>
<dbReference type="PIRSF" id="PIRSF001456">
    <property type="entry name" value="Chorismate_synth"/>
    <property type="match status" value="1"/>
</dbReference>
<dbReference type="SUPFAM" id="SSF103263">
    <property type="entry name" value="Chorismate synthase, AroC"/>
    <property type="match status" value="1"/>
</dbReference>
<dbReference type="PROSITE" id="PS00787">
    <property type="entry name" value="CHORISMATE_SYNTHASE_1"/>
    <property type="match status" value="1"/>
</dbReference>
<dbReference type="PROSITE" id="PS00788">
    <property type="entry name" value="CHORISMATE_SYNTHASE_2"/>
    <property type="match status" value="1"/>
</dbReference>
<dbReference type="PROSITE" id="PS00789">
    <property type="entry name" value="CHORISMATE_SYNTHASE_3"/>
    <property type="match status" value="1"/>
</dbReference>
<evidence type="ECO:0000255" key="1">
    <source>
        <dbReference type="HAMAP-Rule" id="MF_00300"/>
    </source>
</evidence>
<keyword id="KW-0028">Amino-acid biosynthesis</keyword>
<keyword id="KW-0057">Aromatic amino acid biosynthesis</keyword>
<keyword id="KW-0274">FAD</keyword>
<keyword id="KW-0285">Flavoprotein</keyword>
<keyword id="KW-0288">FMN</keyword>
<keyword id="KW-0456">Lyase</keyword>
<keyword id="KW-0521">NADP</keyword>
<proteinExistence type="inferred from homology"/>
<sequence length="361" mass="38959">MAGNSIGQHFRVTTFGESHGLALGCIVDGCPPGLELTEADLQVDLDRRKPGTSKYTTQRREADEVKILSGVFEGKTTGTSIGLLIENTDQRSKDYSEIKDKFRPGHADYTYHQKYGQRDYRGGGRSSARETAMRVAAGAVAKKYLKQEFGIEIRAYLSQMGDVSIDSVDWNEIENNAFFCPDASKVDAFDELIRKLKKEGDSIGAKITVVAQGVPVGLGEPVFARLDADVAHALMGINAVKGVEIGDGFEVVNQRGSEHRDPLTPEGFSSNHAGGILGGISSGQDIVAHIALKPTSSITVPGETITRSGEKTELITKGRHDPCVGIRAVPIAEAMLAIVVMDHLVRHRGQNFGVQTETPKI</sequence>
<comment type="function">
    <text evidence="1">Catalyzes the anti-1,4-elimination of the C-3 phosphate and the C-6 proR hydrogen from 5-enolpyruvylshikimate-3-phosphate (EPSP) to yield chorismate, which is the branch point compound that serves as the starting substrate for the three terminal pathways of aromatic amino acid biosynthesis. This reaction introduces a second double bond into the aromatic ring system.</text>
</comment>
<comment type="catalytic activity">
    <reaction evidence="1">
        <text>5-O-(1-carboxyvinyl)-3-phosphoshikimate = chorismate + phosphate</text>
        <dbReference type="Rhea" id="RHEA:21020"/>
        <dbReference type="ChEBI" id="CHEBI:29748"/>
        <dbReference type="ChEBI" id="CHEBI:43474"/>
        <dbReference type="ChEBI" id="CHEBI:57701"/>
        <dbReference type="EC" id="4.2.3.5"/>
    </reaction>
</comment>
<comment type="cofactor">
    <cofactor evidence="1">
        <name>FMNH2</name>
        <dbReference type="ChEBI" id="CHEBI:57618"/>
    </cofactor>
    <text evidence="1">Reduced FMN (FMNH(2)).</text>
</comment>
<comment type="pathway">
    <text evidence="1">Metabolic intermediate biosynthesis; chorismate biosynthesis; chorismate from D-erythrose 4-phosphate and phosphoenolpyruvate: step 7/7.</text>
</comment>
<comment type="subunit">
    <text evidence="1">Homotetramer.</text>
</comment>
<comment type="similarity">
    <text evidence="1">Belongs to the chorismate synthase family.</text>
</comment>
<organism>
    <name type="scientific">Aliivibrio fischeri (strain MJ11)</name>
    <name type="common">Vibrio fischeri</name>
    <dbReference type="NCBI Taxonomy" id="388396"/>
    <lineage>
        <taxon>Bacteria</taxon>
        <taxon>Pseudomonadati</taxon>
        <taxon>Pseudomonadota</taxon>
        <taxon>Gammaproteobacteria</taxon>
        <taxon>Vibrionales</taxon>
        <taxon>Vibrionaceae</taxon>
        <taxon>Aliivibrio</taxon>
    </lineage>
</organism>
<reference key="1">
    <citation type="submission" date="2008-08" db="EMBL/GenBank/DDBJ databases">
        <title>Complete sequence of Vibrio fischeri strain MJ11.</title>
        <authorList>
            <person name="Mandel M.J."/>
            <person name="Stabb E.V."/>
            <person name="Ruby E.G."/>
            <person name="Ferriera S."/>
            <person name="Johnson J."/>
            <person name="Kravitz S."/>
            <person name="Beeson K."/>
            <person name="Sutton G."/>
            <person name="Rogers Y.-H."/>
            <person name="Friedman R."/>
            <person name="Frazier M."/>
            <person name="Venter J.C."/>
        </authorList>
    </citation>
    <scope>NUCLEOTIDE SEQUENCE [LARGE SCALE GENOMIC DNA]</scope>
    <source>
        <strain>MJ11</strain>
    </source>
</reference>